<protein>
    <recommendedName>
        <fullName evidence="2">Purine nucleoside phosphorylase DeoD-type</fullName>
        <shortName evidence="2">PNP</shortName>
        <ecNumber evidence="2">2.4.2.1</ecNumber>
    </recommendedName>
</protein>
<sequence length="235" mass="25867">MSIHIGAQQGQIAETILLPGDPLRAKYIAETFLEGAECYNNVRGMLGFTGTYKGKRVSVQGTGMGVPSISIYANELMQSYGVQNLIRVGTCGAIQEDIKVRDVIIAMSASSESQTNRLLFDQIDFAPTANFELLHKAYQVATERNLPVKVGNIFTSDSFYRESLDLYKKLASYQVLAIEMESSALYTLAAKYKRNALSILTVSDHILTGEETSADERQSTFNEMIEVALDAALIK</sequence>
<gene>
    <name evidence="2" type="primary">deoD</name>
    <name type="ordered locus">BBR47_30250</name>
</gene>
<proteinExistence type="inferred from homology"/>
<feature type="chain" id="PRO_1000186180" description="Purine nucleoside phosphorylase DeoD-type">
    <location>
        <begin position="1"/>
        <end position="235"/>
    </location>
</feature>
<feature type="active site" description="Proton donor" evidence="2">
    <location>
        <position position="204"/>
    </location>
</feature>
<feature type="binding site" evidence="1">
    <location>
        <position position="4"/>
    </location>
    <ligand>
        <name>a purine D-ribonucleoside</name>
        <dbReference type="ChEBI" id="CHEBI:142355"/>
        <note>ligand shared between dimeric partners</note>
    </ligand>
</feature>
<feature type="binding site" description="in other chain" evidence="1">
    <location>
        <position position="20"/>
    </location>
    <ligand>
        <name>phosphate</name>
        <dbReference type="ChEBI" id="CHEBI:43474"/>
        <note>ligand shared between dimeric partners</note>
    </ligand>
</feature>
<feature type="binding site" description="in other chain" evidence="1">
    <location>
        <position position="24"/>
    </location>
    <ligand>
        <name>phosphate</name>
        <dbReference type="ChEBI" id="CHEBI:43474"/>
        <note>ligand shared between dimeric partners</note>
    </ligand>
</feature>
<feature type="binding site" evidence="1">
    <location>
        <position position="43"/>
    </location>
    <ligand>
        <name>phosphate</name>
        <dbReference type="ChEBI" id="CHEBI:43474"/>
        <note>ligand shared between dimeric partners</note>
    </ligand>
</feature>
<feature type="binding site" description="in other chain" evidence="1">
    <location>
        <begin position="87"/>
        <end position="90"/>
    </location>
    <ligand>
        <name>phosphate</name>
        <dbReference type="ChEBI" id="CHEBI:43474"/>
        <note>ligand shared between dimeric partners</note>
    </ligand>
</feature>
<feature type="binding site" description="in other chain" evidence="1">
    <location>
        <begin position="179"/>
        <end position="181"/>
    </location>
    <ligand>
        <name>a purine D-ribonucleoside</name>
        <dbReference type="ChEBI" id="CHEBI:142355"/>
        <note>ligand shared between dimeric partners</note>
    </ligand>
</feature>
<feature type="binding site" description="in other chain" evidence="1">
    <location>
        <begin position="203"/>
        <end position="204"/>
    </location>
    <ligand>
        <name>a purine D-ribonucleoside</name>
        <dbReference type="ChEBI" id="CHEBI:142355"/>
        <note>ligand shared between dimeric partners</note>
    </ligand>
</feature>
<feature type="site" description="Important for catalytic activity" evidence="2">
    <location>
        <position position="217"/>
    </location>
</feature>
<reference key="1">
    <citation type="submission" date="2005-03" db="EMBL/GenBank/DDBJ databases">
        <title>Brevibacillus brevis strain 47, complete genome.</title>
        <authorList>
            <person name="Hosoyama A."/>
            <person name="Yamada R."/>
            <person name="Hongo Y."/>
            <person name="Terui Y."/>
            <person name="Ankai A."/>
            <person name="Masuyama W."/>
            <person name="Sekiguchi M."/>
            <person name="Takeda T."/>
            <person name="Asano K."/>
            <person name="Ohji S."/>
            <person name="Ichikawa N."/>
            <person name="Narita S."/>
            <person name="Aoki N."/>
            <person name="Miura H."/>
            <person name="Matsushita S."/>
            <person name="Sekigawa T."/>
            <person name="Yamagata H."/>
            <person name="Yoshikawa H."/>
            <person name="Udaka S."/>
            <person name="Tanikawa S."/>
            <person name="Fujita N."/>
        </authorList>
    </citation>
    <scope>NUCLEOTIDE SEQUENCE [LARGE SCALE GENOMIC DNA]</scope>
    <source>
        <strain>47 / JCM 6285 / NBRC 100599</strain>
    </source>
</reference>
<keyword id="KW-0328">Glycosyltransferase</keyword>
<keyword id="KW-1185">Reference proteome</keyword>
<keyword id="KW-0808">Transferase</keyword>
<name>DEOD_BREBN</name>
<dbReference type="EC" id="2.4.2.1" evidence="2"/>
<dbReference type="EMBL" id="AP008955">
    <property type="protein sequence ID" value="BAH44002.1"/>
    <property type="molecule type" value="Genomic_DNA"/>
</dbReference>
<dbReference type="RefSeq" id="WP_015891320.1">
    <property type="nucleotide sequence ID" value="NC_012491.1"/>
</dbReference>
<dbReference type="SMR" id="C0ZDZ3"/>
<dbReference type="STRING" id="358681.BBR47_30250"/>
<dbReference type="KEGG" id="bbe:BBR47_30250"/>
<dbReference type="eggNOG" id="COG0813">
    <property type="taxonomic scope" value="Bacteria"/>
</dbReference>
<dbReference type="HOGENOM" id="CLU_068457_2_0_9"/>
<dbReference type="Proteomes" id="UP000001877">
    <property type="component" value="Chromosome"/>
</dbReference>
<dbReference type="GO" id="GO:0005829">
    <property type="term" value="C:cytosol"/>
    <property type="evidence" value="ECO:0007669"/>
    <property type="project" value="TreeGrafter"/>
</dbReference>
<dbReference type="GO" id="GO:0004731">
    <property type="term" value="F:purine-nucleoside phosphorylase activity"/>
    <property type="evidence" value="ECO:0007669"/>
    <property type="project" value="UniProtKB-UniRule"/>
</dbReference>
<dbReference type="GO" id="GO:0006152">
    <property type="term" value="P:purine nucleoside catabolic process"/>
    <property type="evidence" value="ECO:0007669"/>
    <property type="project" value="TreeGrafter"/>
</dbReference>
<dbReference type="CDD" id="cd09006">
    <property type="entry name" value="PNP_EcPNPI-like"/>
    <property type="match status" value="1"/>
</dbReference>
<dbReference type="Gene3D" id="3.40.50.1580">
    <property type="entry name" value="Nucleoside phosphorylase domain"/>
    <property type="match status" value="1"/>
</dbReference>
<dbReference type="HAMAP" id="MF_01627">
    <property type="entry name" value="Pur_nucleosid_phosp"/>
    <property type="match status" value="1"/>
</dbReference>
<dbReference type="InterPro" id="IPR004402">
    <property type="entry name" value="DeoD-type"/>
</dbReference>
<dbReference type="InterPro" id="IPR018016">
    <property type="entry name" value="Nucleoside_phosphorylase_CS"/>
</dbReference>
<dbReference type="InterPro" id="IPR000845">
    <property type="entry name" value="Nucleoside_phosphorylase_d"/>
</dbReference>
<dbReference type="InterPro" id="IPR035994">
    <property type="entry name" value="Nucleoside_phosphorylase_sf"/>
</dbReference>
<dbReference type="NCBIfam" id="TIGR00107">
    <property type="entry name" value="deoD"/>
    <property type="match status" value="1"/>
</dbReference>
<dbReference type="NCBIfam" id="NF004489">
    <property type="entry name" value="PRK05819.1"/>
    <property type="match status" value="1"/>
</dbReference>
<dbReference type="PANTHER" id="PTHR43691:SF11">
    <property type="entry name" value="FI09636P-RELATED"/>
    <property type="match status" value="1"/>
</dbReference>
<dbReference type="PANTHER" id="PTHR43691">
    <property type="entry name" value="URIDINE PHOSPHORYLASE"/>
    <property type="match status" value="1"/>
</dbReference>
<dbReference type="Pfam" id="PF01048">
    <property type="entry name" value="PNP_UDP_1"/>
    <property type="match status" value="1"/>
</dbReference>
<dbReference type="SUPFAM" id="SSF53167">
    <property type="entry name" value="Purine and uridine phosphorylases"/>
    <property type="match status" value="1"/>
</dbReference>
<dbReference type="PROSITE" id="PS01232">
    <property type="entry name" value="PNP_UDP_1"/>
    <property type="match status" value="1"/>
</dbReference>
<organism>
    <name type="scientific">Brevibacillus brevis (strain 47 / JCM 6285 / NBRC 100599)</name>
    <dbReference type="NCBI Taxonomy" id="358681"/>
    <lineage>
        <taxon>Bacteria</taxon>
        <taxon>Bacillati</taxon>
        <taxon>Bacillota</taxon>
        <taxon>Bacilli</taxon>
        <taxon>Bacillales</taxon>
        <taxon>Paenibacillaceae</taxon>
        <taxon>Brevibacillus</taxon>
    </lineage>
</organism>
<comment type="function">
    <text evidence="2">Catalyzes the reversible phosphorolytic breakdown of the N-glycosidic bond in the beta-(deoxy)ribonucleoside molecules, with the formation of the corresponding free purine bases and pentose-1-phosphate.</text>
</comment>
<comment type="catalytic activity">
    <reaction evidence="2">
        <text>a purine D-ribonucleoside + phosphate = a purine nucleobase + alpha-D-ribose 1-phosphate</text>
        <dbReference type="Rhea" id="RHEA:19805"/>
        <dbReference type="ChEBI" id="CHEBI:26386"/>
        <dbReference type="ChEBI" id="CHEBI:43474"/>
        <dbReference type="ChEBI" id="CHEBI:57720"/>
        <dbReference type="ChEBI" id="CHEBI:142355"/>
        <dbReference type="EC" id="2.4.2.1"/>
    </reaction>
</comment>
<comment type="catalytic activity">
    <reaction evidence="2">
        <text>a purine 2'-deoxy-D-ribonucleoside + phosphate = a purine nucleobase + 2-deoxy-alpha-D-ribose 1-phosphate</text>
        <dbReference type="Rhea" id="RHEA:36431"/>
        <dbReference type="ChEBI" id="CHEBI:26386"/>
        <dbReference type="ChEBI" id="CHEBI:43474"/>
        <dbReference type="ChEBI" id="CHEBI:57259"/>
        <dbReference type="ChEBI" id="CHEBI:142361"/>
        <dbReference type="EC" id="2.4.2.1"/>
    </reaction>
</comment>
<comment type="subunit">
    <text evidence="2">Homohexamer; trimer of homodimers.</text>
</comment>
<comment type="similarity">
    <text evidence="2">Belongs to the PNP/UDP phosphorylase family.</text>
</comment>
<evidence type="ECO:0000250" key="1">
    <source>
        <dbReference type="UniProtKB" id="P50389"/>
    </source>
</evidence>
<evidence type="ECO:0000255" key="2">
    <source>
        <dbReference type="HAMAP-Rule" id="MF_01627"/>
    </source>
</evidence>
<accession>C0ZDZ3</accession>